<proteinExistence type="inferred from homology"/>
<accession>Q6CGK4</accession>
<evidence type="ECO:0000250" key="1"/>
<evidence type="ECO:0000255" key="2">
    <source>
        <dbReference type="PROSITE-ProRule" id="PRU00156"/>
    </source>
</evidence>
<evidence type="ECO:0000256" key="3">
    <source>
        <dbReference type="SAM" id="MobiDB-lite"/>
    </source>
</evidence>
<evidence type="ECO:0000305" key="4"/>
<comment type="function">
    <text evidence="1">PPIases accelerate the folding of proteins. It catalyzes the cis-trans isomerization of proline imidic peptide bonds in oligopeptides. Involved in pre-mRNA splicing (By similarity).</text>
</comment>
<comment type="catalytic activity">
    <reaction>
        <text>[protein]-peptidylproline (omega=180) = [protein]-peptidylproline (omega=0)</text>
        <dbReference type="Rhea" id="RHEA:16237"/>
        <dbReference type="Rhea" id="RHEA-COMP:10747"/>
        <dbReference type="Rhea" id="RHEA-COMP:10748"/>
        <dbReference type="ChEBI" id="CHEBI:83833"/>
        <dbReference type="ChEBI" id="CHEBI:83834"/>
        <dbReference type="EC" id="5.2.1.8"/>
    </reaction>
</comment>
<comment type="subunit">
    <text evidence="1">Associated with the spliceosome.</text>
</comment>
<comment type="subcellular location">
    <subcellularLocation>
        <location evidence="1">Cytoplasm</location>
    </subcellularLocation>
    <subcellularLocation>
        <location evidence="1">Nucleus</location>
    </subcellularLocation>
</comment>
<comment type="similarity">
    <text evidence="4">Belongs to the cyclophilin-type PPIase family. CWC27 subfamily.</text>
</comment>
<dbReference type="EC" id="5.2.1.8"/>
<dbReference type="EMBL" id="CR382127">
    <property type="protein sequence ID" value="CAG84141.1"/>
    <property type="molecule type" value="Genomic_DNA"/>
</dbReference>
<dbReference type="RefSeq" id="XP_500208.1">
    <property type="nucleotide sequence ID" value="XM_500208.1"/>
</dbReference>
<dbReference type="SMR" id="Q6CGK4"/>
<dbReference type="FunCoup" id="Q6CGK4">
    <property type="interactions" value="1165"/>
</dbReference>
<dbReference type="STRING" id="284591.Q6CGK4"/>
<dbReference type="EnsemblFungi" id="CAG84141">
    <property type="protein sequence ID" value="CAG84141"/>
    <property type="gene ID" value="YALI0_A18568g"/>
</dbReference>
<dbReference type="KEGG" id="yli:2905736"/>
<dbReference type="VEuPathDB" id="FungiDB:YALI0_A18568g"/>
<dbReference type="HOGENOM" id="CLU_778917_0_0_1"/>
<dbReference type="InParanoid" id="Q6CGK4"/>
<dbReference type="OMA" id="AVIHEYE"/>
<dbReference type="OrthoDB" id="121149at4891"/>
<dbReference type="Proteomes" id="UP000001300">
    <property type="component" value="Chromosome A"/>
</dbReference>
<dbReference type="GO" id="GO:0071013">
    <property type="term" value="C:catalytic step 2 spliceosome"/>
    <property type="evidence" value="ECO:0000318"/>
    <property type="project" value="GO_Central"/>
</dbReference>
<dbReference type="GO" id="GO:0005737">
    <property type="term" value="C:cytoplasm"/>
    <property type="evidence" value="ECO:0007669"/>
    <property type="project" value="UniProtKB-SubCell"/>
</dbReference>
<dbReference type="GO" id="GO:0003755">
    <property type="term" value="F:peptidyl-prolyl cis-trans isomerase activity"/>
    <property type="evidence" value="ECO:0007669"/>
    <property type="project" value="UniProtKB-KW"/>
</dbReference>
<dbReference type="GO" id="GO:0006397">
    <property type="term" value="P:mRNA processing"/>
    <property type="evidence" value="ECO:0007669"/>
    <property type="project" value="UniProtKB-KW"/>
</dbReference>
<dbReference type="GO" id="GO:0006457">
    <property type="term" value="P:protein folding"/>
    <property type="evidence" value="ECO:0000318"/>
    <property type="project" value="GO_Central"/>
</dbReference>
<dbReference type="GO" id="GO:0008380">
    <property type="term" value="P:RNA splicing"/>
    <property type="evidence" value="ECO:0007669"/>
    <property type="project" value="UniProtKB-KW"/>
</dbReference>
<dbReference type="Gene3D" id="2.40.100.10">
    <property type="entry name" value="Cyclophilin-like"/>
    <property type="match status" value="1"/>
</dbReference>
<dbReference type="InterPro" id="IPR029000">
    <property type="entry name" value="Cyclophilin-like_dom_sf"/>
</dbReference>
<dbReference type="InterPro" id="IPR002130">
    <property type="entry name" value="Cyclophilin-type_PPIase_dom"/>
</dbReference>
<dbReference type="InterPro" id="IPR044666">
    <property type="entry name" value="Cyclophilin_A-like"/>
</dbReference>
<dbReference type="PANTHER" id="PTHR45625">
    <property type="entry name" value="PEPTIDYL-PROLYL CIS-TRANS ISOMERASE-RELATED"/>
    <property type="match status" value="1"/>
</dbReference>
<dbReference type="PANTHER" id="PTHR45625:SF6">
    <property type="entry name" value="SPLICEOSOME-ASSOCIATED PROTEIN CWC27 HOMOLOG"/>
    <property type="match status" value="1"/>
</dbReference>
<dbReference type="Pfam" id="PF00160">
    <property type="entry name" value="Pro_isomerase"/>
    <property type="match status" value="1"/>
</dbReference>
<dbReference type="SUPFAM" id="SSF50891">
    <property type="entry name" value="Cyclophilin-like"/>
    <property type="match status" value="1"/>
</dbReference>
<dbReference type="PROSITE" id="PS50072">
    <property type="entry name" value="CSA_PPIASE_2"/>
    <property type="match status" value="1"/>
</dbReference>
<feature type="chain" id="PRO_0000064188" description="Peptidyl-prolyl isomerase CWC27">
    <location>
        <begin position="1"/>
        <end position="356"/>
    </location>
</feature>
<feature type="domain" description="PPIase cyclophilin-type" evidence="2">
    <location>
        <begin position="5"/>
        <end position="205"/>
    </location>
</feature>
<feature type="region of interest" description="Disordered" evidence="3">
    <location>
        <begin position="172"/>
        <end position="214"/>
    </location>
</feature>
<feature type="region of interest" description="Disordered" evidence="3">
    <location>
        <begin position="234"/>
        <end position="266"/>
    </location>
</feature>
<feature type="region of interest" description="Disordered" evidence="3">
    <location>
        <begin position="279"/>
        <end position="331"/>
    </location>
</feature>
<feature type="compositionally biased region" description="Basic and acidic residues" evidence="3">
    <location>
        <begin position="181"/>
        <end position="192"/>
    </location>
</feature>
<feature type="compositionally biased region" description="Basic residues" evidence="3">
    <location>
        <begin position="193"/>
        <end position="202"/>
    </location>
</feature>
<feature type="compositionally biased region" description="Basic and acidic residues" evidence="3">
    <location>
        <begin position="279"/>
        <end position="294"/>
    </location>
</feature>
<sequence>MEPQTTAKVVLTTTKGPIEAELFAKEVPLACTRFLQLCKSGYYDSKPFYRVLPGELIQCGQQEAGNNTNSYPKLKDEPHTRIKLKRGYLAMASEYTENNRRVPNSATTEFFIALKEIPFSGTVIGKITGDTIYNAQDIARGELTEDGYPMYVQTVQNVEIVLGGGLVQETQKAGADAGADAESRENKSGSRDRPKKPKRKLQVNHDDDDDEEPVFTKKSVSKLVEDKFKKDNTNVAKKPKVEASAEQPEPAAVQATTTHHVQDAEDMTTEVDTVVSERLEKFRNMSRTKPDTKPKSMLISQEDRIRRRLGLGPDEDIPSDASDPSSDEDDDFDIFKHKFICPEDDKAEDSLITLGA</sequence>
<protein>
    <recommendedName>
        <fullName>Peptidyl-prolyl isomerase CWC27</fullName>
        <shortName>PPIase CWC27</shortName>
        <ecNumber>5.2.1.8</ecNumber>
    </recommendedName>
    <alternativeName>
        <fullName>Rotamase CWC27</fullName>
    </alternativeName>
</protein>
<name>CWC27_YARLI</name>
<organism>
    <name type="scientific">Yarrowia lipolytica (strain CLIB 122 / E 150)</name>
    <name type="common">Yeast</name>
    <name type="synonym">Candida lipolytica</name>
    <dbReference type="NCBI Taxonomy" id="284591"/>
    <lineage>
        <taxon>Eukaryota</taxon>
        <taxon>Fungi</taxon>
        <taxon>Dikarya</taxon>
        <taxon>Ascomycota</taxon>
        <taxon>Saccharomycotina</taxon>
        <taxon>Dipodascomycetes</taxon>
        <taxon>Dipodascales</taxon>
        <taxon>Dipodascales incertae sedis</taxon>
        <taxon>Yarrowia</taxon>
    </lineage>
</organism>
<reference key="1">
    <citation type="journal article" date="2004" name="Nature">
        <title>Genome evolution in yeasts.</title>
        <authorList>
            <person name="Dujon B."/>
            <person name="Sherman D."/>
            <person name="Fischer G."/>
            <person name="Durrens P."/>
            <person name="Casaregola S."/>
            <person name="Lafontaine I."/>
            <person name="de Montigny J."/>
            <person name="Marck C."/>
            <person name="Neuveglise C."/>
            <person name="Talla E."/>
            <person name="Goffard N."/>
            <person name="Frangeul L."/>
            <person name="Aigle M."/>
            <person name="Anthouard V."/>
            <person name="Babour A."/>
            <person name="Barbe V."/>
            <person name="Barnay S."/>
            <person name="Blanchin S."/>
            <person name="Beckerich J.-M."/>
            <person name="Beyne E."/>
            <person name="Bleykasten C."/>
            <person name="Boisrame A."/>
            <person name="Boyer J."/>
            <person name="Cattolico L."/>
            <person name="Confanioleri F."/>
            <person name="de Daruvar A."/>
            <person name="Despons L."/>
            <person name="Fabre E."/>
            <person name="Fairhead C."/>
            <person name="Ferry-Dumazet H."/>
            <person name="Groppi A."/>
            <person name="Hantraye F."/>
            <person name="Hennequin C."/>
            <person name="Jauniaux N."/>
            <person name="Joyet P."/>
            <person name="Kachouri R."/>
            <person name="Kerrest A."/>
            <person name="Koszul R."/>
            <person name="Lemaire M."/>
            <person name="Lesur I."/>
            <person name="Ma L."/>
            <person name="Muller H."/>
            <person name="Nicaud J.-M."/>
            <person name="Nikolski M."/>
            <person name="Oztas S."/>
            <person name="Ozier-Kalogeropoulos O."/>
            <person name="Pellenz S."/>
            <person name="Potier S."/>
            <person name="Richard G.-F."/>
            <person name="Straub M.-L."/>
            <person name="Suleau A."/>
            <person name="Swennen D."/>
            <person name="Tekaia F."/>
            <person name="Wesolowski-Louvel M."/>
            <person name="Westhof E."/>
            <person name="Wirth B."/>
            <person name="Zeniou-Meyer M."/>
            <person name="Zivanovic Y."/>
            <person name="Bolotin-Fukuhara M."/>
            <person name="Thierry A."/>
            <person name="Bouchier C."/>
            <person name="Caudron B."/>
            <person name="Scarpelli C."/>
            <person name="Gaillardin C."/>
            <person name="Weissenbach J."/>
            <person name="Wincker P."/>
            <person name="Souciet J.-L."/>
        </authorList>
    </citation>
    <scope>NUCLEOTIDE SEQUENCE [LARGE SCALE GENOMIC DNA]</scope>
    <source>
        <strain>CLIB 122 / E 150</strain>
    </source>
</reference>
<gene>
    <name type="primary">CWC27</name>
    <name type="ordered locus">YALI0A18568g</name>
</gene>
<keyword id="KW-0963">Cytoplasm</keyword>
<keyword id="KW-0413">Isomerase</keyword>
<keyword id="KW-0507">mRNA processing</keyword>
<keyword id="KW-0508">mRNA splicing</keyword>
<keyword id="KW-0539">Nucleus</keyword>
<keyword id="KW-1185">Reference proteome</keyword>
<keyword id="KW-0697">Rotamase</keyword>
<keyword id="KW-0747">Spliceosome</keyword>